<gene>
    <name evidence="1" type="primary">rplT</name>
    <name type="ordered locus">HPP12_0126</name>
</gene>
<accession>B6JPM5</accession>
<feature type="chain" id="PRO_1000122324" description="Large ribosomal subunit protein bL20">
    <location>
        <begin position="1"/>
        <end position="116"/>
    </location>
</feature>
<dbReference type="EMBL" id="CP001217">
    <property type="protein sequence ID" value="ACJ07286.1"/>
    <property type="molecule type" value="Genomic_DNA"/>
</dbReference>
<dbReference type="SMR" id="B6JPM5"/>
<dbReference type="KEGG" id="hpp:HPP12_0126"/>
<dbReference type="HOGENOM" id="CLU_123265_0_1_7"/>
<dbReference type="Proteomes" id="UP000008198">
    <property type="component" value="Chromosome"/>
</dbReference>
<dbReference type="GO" id="GO:1990904">
    <property type="term" value="C:ribonucleoprotein complex"/>
    <property type="evidence" value="ECO:0007669"/>
    <property type="project" value="UniProtKB-KW"/>
</dbReference>
<dbReference type="GO" id="GO:0005840">
    <property type="term" value="C:ribosome"/>
    <property type="evidence" value="ECO:0007669"/>
    <property type="project" value="UniProtKB-KW"/>
</dbReference>
<dbReference type="GO" id="GO:0019843">
    <property type="term" value="F:rRNA binding"/>
    <property type="evidence" value="ECO:0007669"/>
    <property type="project" value="UniProtKB-UniRule"/>
</dbReference>
<dbReference type="GO" id="GO:0003735">
    <property type="term" value="F:structural constituent of ribosome"/>
    <property type="evidence" value="ECO:0007669"/>
    <property type="project" value="InterPro"/>
</dbReference>
<dbReference type="GO" id="GO:0000027">
    <property type="term" value="P:ribosomal large subunit assembly"/>
    <property type="evidence" value="ECO:0007669"/>
    <property type="project" value="UniProtKB-UniRule"/>
</dbReference>
<dbReference type="GO" id="GO:0006412">
    <property type="term" value="P:translation"/>
    <property type="evidence" value="ECO:0007669"/>
    <property type="project" value="InterPro"/>
</dbReference>
<dbReference type="CDD" id="cd07026">
    <property type="entry name" value="Ribosomal_L20"/>
    <property type="match status" value="1"/>
</dbReference>
<dbReference type="FunFam" id="1.10.1900.20:FF:000001">
    <property type="entry name" value="50S ribosomal protein L20"/>
    <property type="match status" value="1"/>
</dbReference>
<dbReference type="Gene3D" id="6.10.160.10">
    <property type="match status" value="1"/>
</dbReference>
<dbReference type="Gene3D" id="1.10.1900.20">
    <property type="entry name" value="Ribosomal protein L20"/>
    <property type="match status" value="1"/>
</dbReference>
<dbReference type="HAMAP" id="MF_00382">
    <property type="entry name" value="Ribosomal_bL20"/>
    <property type="match status" value="1"/>
</dbReference>
<dbReference type="InterPro" id="IPR005813">
    <property type="entry name" value="Ribosomal_bL20"/>
</dbReference>
<dbReference type="InterPro" id="IPR049946">
    <property type="entry name" value="RIBOSOMAL_L20_CS"/>
</dbReference>
<dbReference type="InterPro" id="IPR035566">
    <property type="entry name" value="Ribosomal_protein_bL20_C"/>
</dbReference>
<dbReference type="NCBIfam" id="TIGR01032">
    <property type="entry name" value="rplT_bact"/>
    <property type="match status" value="1"/>
</dbReference>
<dbReference type="PANTHER" id="PTHR10986">
    <property type="entry name" value="39S RIBOSOMAL PROTEIN L20"/>
    <property type="match status" value="1"/>
</dbReference>
<dbReference type="Pfam" id="PF00453">
    <property type="entry name" value="Ribosomal_L20"/>
    <property type="match status" value="1"/>
</dbReference>
<dbReference type="PRINTS" id="PR00062">
    <property type="entry name" value="RIBOSOMALL20"/>
</dbReference>
<dbReference type="SUPFAM" id="SSF74731">
    <property type="entry name" value="Ribosomal protein L20"/>
    <property type="match status" value="1"/>
</dbReference>
<dbReference type="PROSITE" id="PS00937">
    <property type="entry name" value="RIBOSOMAL_L20"/>
    <property type="match status" value="1"/>
</dbReference>
<keyword id="KW-0687">Ribonucleoprotein</keyword>
<keyword id="KW-0689">Ribosomal protein</keyword>
<keyword id="KW-0694">RNA-binding</keyword>
<keyword id="KW-0699">rRNA-binding</keyword>
<comment type="function">
    <text evidence="1">Binds directly to 23S ribosomal RNA and is necessary for the in vitro assembly process of the 50S ribosomal subunit. It is not involved in the protein synthesizing functions of that subunit.</text>
</comment>
<comment type="similarity">
    <text evidence="1">Belongs to the bacterial ribosomal protein bL20 family.</text>
</comment>
<reference key="1">
    <citation type="submission" date="2008-10" db="EMBL/GenBank/DDBJ databases">
        <title>The complete genome sequence of Helicobacter pylori strain P12.</title>
        <authorList>
            <person name="Fischer W."/>
            <person name="Windhager L."/>
            <person name="Karnholz A."/>
            <person name="Zeiller M."/>
            <person name="Zimmer R."/>
            <person name="Haas R."/>
        </authorList>
    </citation>
    <scope>NUCLEOTIDE SEQUENCE [LARGE SCALE GENOMIC DNA]</scope>
    <source>
        <strain>P12</strain>
    </source>
</reference>
<evidence type="ECO:0000255" key="1">
    <source>
        <dbReference type="HAMAP-Rule" id="MF_00382"/>
    </source>
</evidence>
<evidence type="ECO:0000305" key="2"/>
<proteinExistence type="inferred from homology"/>
<protein>
    <recommendedName>
        <fullName evidence="1">Large ribosomal subunit protein bL20</fullName>
    </recommendedName>
    <alternativeName>
        <fullName evidence="2">50S ribosomal protein L20</fullName>
    </alternativeName>
</protein>
<sequence length="116" mass="14073">MRVKTGVVRRRRHKKVLKLARGFYSGRRKHFRKAKEQLERSMYYAFRDRKQKKRKFRSLWVVRINAACRMHETSYSRFMHALKVANIELDRKVLADMAMNDMQAFKSVLESVKEHL</sequence>
<organism>
    <name type="scientific">Helicobacter pylori (strain P12)</name>
    <dbReference type="NCBI Taxonomy" id="570508"/>
    <lineage>
        <taxon>Bacteria</taxon>
        <taxon>Pseudomonadati</taxon>
        <taxon>Campylobacterota</taxon>
        <taxon>Epsilonproteobacteria</taxon>
        <taxon>Campylobacterales</taxon>
        <taxon>Helicobacteraceae</taxon>
        <taxon>Helicobacter</taxon>
    </lineage>
</organism>
<name>RL20_HELP2</name>